<feature type="chain" id="PRO_1000012996" description="UPF0145 protein ESA_02470">
    <location>
        <begin position="1"/>
        <end position="107"/>
    </location>
</feature>
<name>Y2470_CROS8</name>
<reference key="1">
    <citation type="journal article" date="2010" name="PLoS ONE">
        <title>Genome sequence of Cronobacter sakazakii BAA-894 and comparative genomic hybridization analysis with other Cronobacter species.</title>
        <authorList>
            <person name="Kucerova E."/>
            <person name="Clifton S.W."/>
            <person name="Xia X.Q."/>
            <person name="Long F."/>
            <person name="Porwollik S."/>
            <person name="Fulton L."/>
            <person name="Fronick C."/>
            <person name="Minx P."/>
            <person name="Kyung K."/>
            <person name="Warren W."/>
            <person name="Fulton R."/>
            <person name="Feng D."/>
            <person name="Wollam A."/>
            <person name="Shah N."/>
            <person name="Bhonagiri V."/>
            <person name="Nash W.E."/>
            <person name="Hallsworth-Pepin K."/>
            <person name="Wilson R.K."/>
            <person name="McClelland M."/>
            <person name="Forsythe S.J."/>
        </authorList>
    </citation>
    <scope>NUCLEOTIDE SEQUENCE [LARGE SCALE GENOMIC DNA]</scope>
    <source>
        <strain>ATCC BAA-894</strain>
    </source>
</reference>
<protein>
    <recommendedName>
        <fullName evidence="1">UPF0145 protein ESA_02470</fullName>
    </recommendedName>
</protein>
<dbReference type="EMBL" id="CP000783">
    <property type="protein sequence ID" value="ABU77716.1"/>
    <property type="molecule type" value="Genomic_DNA"/>
</dbReference>
<dbReference type="RefSeq" id="WP_004386731.1">
    <property type="nucleotide sequence ID" value="NC_009778.1"/>
</dbReference>
<dbReference type="SMR" id="A7MF54"/>
<dbReference type="KEGG" id="esa:ESA_02470"/>
<dbReference type="HOGENOM" id="CLU_117144_3_0_6"/>
<dbReference type="Proteomes" id="UP000000260">
    <property type="component" value="Chromosome"/>
</dbReference>
<dbReference type="Gene3D" id="3.30.110.70">
    <property type="entry name" value="Hypothetical protein apc22750. Chain B"/>
    <property type="match status" value="1"/>
</dbReference>
<dbReference type="HAMAP" id="MF_00338">
    <property type="entry name" value="UPF0145"/>
    <property type="match status" value="1"/>
</dbReference>
<dbReference type="InterPro" id="IPR035439">
    <property type="entry name" value="UPF0145_dom_sf"/>
</dbReference>
<dbReference type="InterPro" id="IPR002765">
    <property type="entry name" value="UPF0145_YbjQ-like"/>
</dbReference>
<dbReference type="NCBIfam" id="NF002776">
    <property type="entry name" value="PRK02877.1"/>
    <property type="match status" value="1"/>
</dbReference>
<dbReference type="PANTHER" id="PTHR34068">
    <property type="entry name" value="UPF0145 PROTEIN YBJQ"/>
    <property type="match status" value="1"/>
</dbReference>
<dbReference type="PANTHER" id="PTHR34068:SF1">
    <property type="entry name" value="UPF0145 PROTEIN YBJQ"/>
    <property type="match status" value="1"/>
</dbReference>
<dbReference type="Pfam" id="PF01906">
    <property type="entry name" value="YbjQ_1"/>
    <property type="match status" value="1"/>
</dbReference>
<dbReference type="SUPFAM" id="SSF117782">
    <property type="entry name" value="YbjQ-like"/>
    <property type="match status" value="1"/>
</dbReference>
<keyword id="KW-1185">Reference proteome</keyword>
<proteinExistence type="inferred from homology"/>
<evidence type="ECO:0000255" key="1">
    <source>
        <dbReference type="HAMAP-Rule" id="MF_00338"/>
    </source>
</evidence>
<sequence length="107" mass="11422">MQFSTTPTLEGQVIVEYCGVVTGEAILGANIFRDFFAGIRDIVGGRSGAYEKELRKAREIAFRELGDQAASLGADAVVGIDIDYETVGKDGSMLMVSVSGTAVKTRR</sequence>
<gene>
    <name type="ordered locus">ESA_02470</name>
</gene>
<organism>
    <name type="scientific">Cronobacter sakazakii (strain ATCC BAA-894)</name>
    <name type="common">Enterobacter sakazakii</name>
    <dbReference type="NCBI Taxonomy" id="290339"/>
    <lineage>
        <taxon>Bacteria</taxon>
        <taxon>Pseudomonadati</taxon>
        <taxon>Pseudomonadota</taxon>
        <taxon>Gammaproteobacteria</taxon>
        <taxon>Enterobacterales</taxon>
        <taxon>Enterobacteriaceae</taxon>
        <taxon>Cronobacter</taxon>
    </lineage>
</organism>
<comment type="similarity">
    <text evidence="1">Belongs to the UPF0145 family.</text>
</comment>
<accession>A7MF54</accession>